<gene>
    <name type="primary">uhpC</name>
    <name type="ordered locus">STM3788</name>
</gene>
<dbReference type="EMBL" id="M89480">
    <property type="protein sequence ID" value="AAA27245.1"/>
    <property type="molecule type" value="Genomic_DNA"/>
</dbReference>
<dbReference type="EMBL" id="AE006468">
    <property type="protein sequence ID" value="AAL22646.1"/>
    <property type="molecule type" value="Genomic_DNA"/>
</dbReference>
<dbReference type="PIR" id="C41853">
    <property type="entry name" value="C41853"/>
</dbReference>
<dbReference type="RefSeq" id="NP_462687.1">
    <property type="nucleotide sequence ID" value="NC_003197.2"/>
</dbReference>
<dbReference type="RefSeq" id="WP_000948173.1">
    <property type="nucleotide sequence ID" value="NC_003197.2"/>
</dbReference>
<dbReference type="SMR" id="P27669"/>
<dbReference type="STRING" id="99287.STM3788"/>
<dbReference type="PaxDb" id="99287-STM3788"/>
<dbReference type="GeneID" id="1255312"/>
<dbReference type="KEGG" id="stm:STM3788"/>
<dbReference type="PATRIC" id="fig|99287.12.peg.4008"/>
<dbReference type="HOGENOM" id="CLU_001265_31_0_6"/>
<dbReference type="OMA" id="NAWFQGW"/>
<dbReference type="PhylomeDB" id="P27669"/>
<dbReference type="BioCyc" id="SENT99287:STM3788-MONOMER"/>
<dbReference type="Proteomes" id="UP000001014">
    <property type="component" value="Chromosome"/>
</dbReference>
<dbReference type="GO" id="GO:0005886">
    <property type="term" value="C:plasma membrane"/>
    <property type="evidence" value="ECO:0000318"/>
    <property type="project" value="GO_Central"/>
</dbReference>
<dbReference type="GO" id="GO:0061513">
    <property type="term" value="F:glucose 6-phosphate:phosphate antiporter activity"/>
    <property type="evidence" value="ECO:0000318"/>
    <property type="project" value="GO_Central"/>
</dbReference>
<dbReference type="GO" id="GO:0015760">
    <property type="term" value="P:glucose-6-phosphate transport"/>
    <property type="evidence" value="ECO:0000318"/>
    <property type="project" value="GO_Central"/>
</dbReference>
<dbReference type="GO" id="GO:0035435">
    <property type="term" value="P:phosphate ion transmembrane transport"/>
    <property type="evidence" value="ECO:0000318"/>
    <property type="project" value="GO_Central"/>
</dbReference>
<dbReference type="CDD" id="cd17488">
    <property type="entry name" value="MFS_UhpC"/>
    <property type="match status" value="1"/>
</dbReference>
<dbReference type="FunFam" id="1.20.1250.20:FF:000007">
    <property type="entry name" value="Glycerol-3-phosphate transporter"/>
    <property type="match status" value="1"/>
</dbReference>
<dbReference type="FunFam" id="1.20.1250.20:FF:000110">
    <property type="entry name" value="Regulatory protein uhpC"/>
    <property type="match status" value="1"/>
</dbReference>
<dbReference type="Gene3D" id="1.20.1250.20">
    <property type="entry name" value="MFS general substrate transporter like domains"/>
    <property type="match status" value="2"/>
</dbReference>
<dbReference type="InterPro" id="IPR011701">
    <property type="entry name" value="MFS"/>
</dbReference>
<dbReference type="InterPro" id="IPR020846">
    <property type="entry name" value="MFS_dom"/>
</dbReference>
<dbReference type="InterPro" id="IPR036259">
    <property type="entry name" value="MFS_trans_sf"/>
</dbReference>
<dbReference type="InterPro" id="IPR051337">
    <property type="entry name" value="OPA_Antiporter"/>
</dbReference>
<dbReference type="InterPro" id="IPR021159">
    <property type="entry name" value="Sugar-P_transporter_CS"/>
</dbReference>
<dbReference type="InterPro" id="IPR000849">
    <property type="entry name" value="Sugar_P_transporter"/>
</dbReference>
<dbReference type="NCBIfam" id="TIGR00881">
    <property type="entry name" value="2A0104"/>
    <property type="match status" value="1"/>
</dbReference>
<dbReference type="NCBIfam" id="NF008661">
    <property type="entry name" value="PRK11663.1"/>
    <property type="match status" value="1"/>
</dbReference>
<dbReference type="PANTHER" id="PTHR43826">
    <property type="entry name" value="GLUCOSE-6-PHOSPHATE EXCHANGER SLC37A4"/>
    <property type="match status" value="1"/>
</dbReference>
<dbReference type="PANTHER" id="PTHR43826:SF3">
    <property type="entry name" value="GLUCOSE-6-PHOSPHATE EXCHANGER SLC37A4"/>
    <property type="match status" value="1"/>
</dbReference>
<dbReference type="Pfam" id="PF07690">
    <property type="entry name" value="MFS_1"/>
    <property type="match status" value="1"/>
</dbReference>
<dbReference type="PIRSF" id="PIRSF002808">
    <property type="entry name" value="Hexose_phosphate_transp"/>
    <property type="match status" value="1"/>
</dbReference>
<dbReference type="SUPFAM" id="SSF103473">
    <property type="entry name" value="MFS general substrate transporter"/>
    <property type="match status" value="1"/>
</dbReference>
<dbReference type="PROSITE" id="PS00942">
    <property type="entry name" value="GLPT"/>
    <property type="match status" value="1"/>
</dbReference>
<dbReference type="PROSITE" id="PS50850">
    <property type="entry name" value="MFS"/>
    <property type="match status" value="1"/>
</dbReference>
<reference key="1">
    <citation type="journal article" date="1992" name="J. Bacteriol.">
        <title>Structure and function of the uhp genes for the sugar phosphate transport system in Escherichia coli and Salmonella typhimurium.</title>
        <authorList>
            <person name="Island M.D."/>
            <person name="Wei B.-Y."/>
            <person name="Kadner R.J."/>
        </authorList>
    </citation>
    <scope>NUCLEOTIDE SEQUENCE [GENOMIC DNA]</scope>
    <source>
        <strain>LT2</strain>
    </source>
</reference>
<reference key="2">
    <citation type="journal article" date="2001" name="Nature">
        <title>Complete genome sequence of Salmonella enterica serovar Typhimurium LT2.</title>
        <authorList>
            <person name="McClelland M."/>
            <person name="Sanderson K.E."/>
            <person name="Spieth J."/>
            <person name="Clifton S.W."/>
            <person name="Latreille P."/>
            <person name="Courtney L."/>
            <person name="Porwollik S."/>
            <person name="Ali J."/>
            <person name="Dante M."/>
            <person name="Du F."/>
            <person name="Hou S."/>
            <person name="Layman D."/>
            <person name="Leonard S."/>
            <person name="Nguyen C."/>
            <person name="Scott K."/>
            <person name="Holmes A."/>
            <person name="Grewal N."/>
            <person name="Mulvaney E."/>
            <person name="Ryan E."/>
            <person name="Sun H."/>
            <person name="Florea L."/>
            <person name="Miller W."/>
            <person name="Stoneking T."/>
            <person name="Nhan M."/>
            <person name="Waterston R."/>
            <person name="Wilson R.K."/>
        </authorList>
    </citation>
    <scope>NUCLEOTIDE SEQUENCE [LARGE SCALE GENOMIC DNA]</scope>
    <source>
        <strain>LT2 / SGSC1412 / ATCC 700720</strain>
    </source>
</reference>
<protein>
    <recommendedName>
        <fullName evidence="1">Membrane sensor protein UhpC</fullName>
    </recommendedName>
</protein>
<sequence>MLSFLKAPANAPLITDKHEVDARYRYWRRHILITIWLGYALFYFTRKSFNAAAPEILASGILTRSDIGLLATLFYITYGVSKFVSGIVSDRSNARYFMGIGLIATGVVNILFGFSTSLWAFALLWALNAFFQGFGSPVCARLLTAWYSRTERGGWWALWNTAHNVGGALIPLVMAAVALHYGWRVGMMVAGLLAIGVGMVLCWRLRDRPQAIGLPPVGDWRHDALEVAQQQEGAGLSRKEILAKYVLLNPYIWLLSLCYVLVYVVRAAINDWGNLYMSETLGVDLVTANTAVSMFELGGFIGALVAGWGSDKLFNGNRGPMNLIFAAGILLSVGSLWLMPFASYVMQAACFFTTGFFVFGPQMLIGMAAAECSHKEAAGAATGFVGLFAYLGASLSGWPLAKVLEIWHWTGFFAVIAIAAGISALLLLPFLNAQAPRETHEA</sequence>
<evidence type="ECO:0000250" key="1">
    <source>
        <dbReference type="UniProtKB" id="P09836"/>
    </source>
</evidence>
<evidence type="ECO:0000255" key="2"/>
<evidence type="ECO:0000305" key="3"/>
<proteinExistence type="inferred from homology"/>
<feature type="chain" id="PRO_0000199882" description="Membrane sensor protein UhpC">
    <location>
        <begin position="1"/>
        <end position="442"/>
    </location>
</feature>
<feature type="topological domain" description="Cytoplasmic" evidence="3">
    <location>
        <begin position="1"/>
        <end position="30"/>
    </location>
</feature>
<feature type="transmembrane region" description="Helical" evidence="2">
    <location>
        <begin position="31"/>
        <end position="51"/>
    </location>
</feature>
<feature type="topological domain" description="Periplasmic" evidence="3">
    <location>
        <begin position="52"/>
        <end position="66"/>
    </location>
</feature>
<feature type="transmembrane region" description="Helical" evidence="2">
    <location>
        <begin position="67"/>
        <end position="87"/>
    </location>
</feature>
<feature type="topological domain" description="Cytoplasmic" evidence="3">
    <location>
        <begin position="88"/>
        <end position="95"/>
    </location>
</feature>
<feature type="transmembrane region" description="Helical" evidence="2">
    <location>
        <begin position="96"/>
        <end position="118"/>
    </location>
</feature>
<feature type="topological domain" description="Periplasmic" evidence="3">
    <location>
        <begin position="119"/>
        <end position="121"/>
    </location>
</feature>
<feature type="transmembrane region" description="Helical" evidence="2">
    <location>
        <begin position="122"/>
        <end position="144"/>
    </location>
</feature>
<feature type="topological domain" description="Cytoplasmic" evidence="3">
    <location>
        <begin position="145"/>
        <end position="162"/>
    </location>
</feature>
<feature type="transmembrane region" description="Helical" evidence="2">
    <location>
        <begin position="163"/>
        <end position="183"/>
    </location>
</feature>
<feature type="topological domain" description="Periplasmic" evidence="3">
    <location>
        <position position="184"/>
    </location>
</feature>
<feature type="transmembrane region" description="Helical" evidence="2">
    <location>
        <begin position="185"/>
        <end position="205"/>
    </location>
</feature>
<feature type="topological domain" description="Cytoplasmic" evidence="3">
    <location>
        <begin position="206"/>
        <end position="244"/>
    </location>
</feature>
<feature type="transmembrane region" description="Helical" evidence="2">
    <location>
        <begin position="245"/>
        <end position="265"/>
    </location>
</feature>
<feature type="topological domain" description="Periplasmic" evidence="3">
    <location>
        <begin position="266"/>
        <end position="289"/>
    </location>
</feature>
<feature type="transmembrane region" description="Helical" evidence="2">
    <location>
        <begin position="290"/>
        <end position="310"/>
    </location>
</feature>
<feature type="topological domain" description="Cytoplasmic" evidence="3">
    <location>
        <begin position="311"/>
        <end position="322"/>
    </location>
</feature>
<feature type="transmembrane region" description="Helical" evidence="2">
    <location>
        <begin position="323"/>
        <end position="343"/>
    </location>
</feature>
<feature type="topological domain" description="Periplasmic" evidence="3">
    <location>
        <begin position="344"/>
        <end position="347"/>
    </location>
</feature>
<feature type="transmembrane region" description="Helical" evidence="2">
    <location>
        <begin position="348"/>
        <end position="368"/>
    </location>
</feature>
<feature type="topological domain" description="Cytoplasmic" evidence="3">
    <location>
        <begin position="369"/>
        <end position="379"/>
    </location>
</feature>
<feature type="transmembrane region" description="Helical" evidence="2">
    <location>
        <begin position="380"/>
        <end position="400"/>
    </location>
</feature>
<feature type="topological domain" description="Periplasmic" evidence="3">
    <location>
        <begin position="401"/>
        <end position="410"/>
    </location>
</feature>
<feature type="transmembrane region" description="Helical" evidence="2">
    <location>
        <begin position="411"/>
        <end position="431"/>
    </location>
</feature>
<feature type="topological domain" description="Cytoplasmic" evidence="1">
    <location>
        <begin position="432"/>
        <end position="442"/>
    </location>
</feature>
<accession>P27669</accession>
<comment type="function">
    <text evidence="1">Part of the UhpABC signaling cascade that controls the expression of the hexose phosphate transporter UhpT. UhpC senses external glucose-6-phosphate and interacts with the histidine kinase UhpB, leading to the stimulation of the autokinase activity of UhpB.</text>
</comment>
<comment type="subcellular location">
    <subcellularLocation>
        <location evidence="1">Cell inner membrane</location>
        <topology evidence="2">Multi-pass membrane protein</topology>
    </subcellularLocation>
</comment>
<comment type="similarity">
    <text evidence="3">Belongs to the major facilitator superfamily. Organophosphate:Pi antiporter (OPA) (TC 2.A.1.4) family.</text>
</comment>
<name>UHPC_SALTY</name>
<keyword id="KW-0997">Cell inner membrane</keyword>
<keyword id="KW-1003">Cell membrane</keyword>
<keyword id="KW-0472">Membrane</keyword>
<keyword id="KW-1185">Reference proteome</keyword>
<keyword id="KW-0812">Transmembrane</keyword>
<keyword id="KW-1133">Transmembrane helix</keyword>
<organism>
    <name type="scientific">Salmonella typhimurium (strain LT2 / SGSC1412 / ATCC 700720)</name>
    <dbReference type="NCBI Taxonomy" id="99287"/>
    <lineage>
        <taxon>Bacteria</taxon>
        <taxon>Pseudomonadati</taxon>
        <taxon>Pseudomonadota</taxon>
        <taxon>Gammaproteobacteria</taxon>
        <taxon>Enterobacterales</taxon>
        <taxon>Enterobacteriaceae</taxon>
        <taxon>Salmonella</taxon>
    </lineage>
</organism>